<sequence>MYVTMMMTDQIPLELPPLLNGEVAMMPHLVNGDAAQQVILVQVNPGETFTIRAEDGTLQCIQGPAEVPMMSPNGSIPPIHVPPGYISQVIEDSTGVRRVVVTPQSPECYPPSYPSAMSPTHHLPPYLTHHPHFIHNSHTAYYPPVTGPGDMPPQFFPQHHLPHTIYGEQEIIPFYGMSTYITREDQYSKPPHKKLKDRQIDRQNRLNSPPSSIYKSSCTTVYNGYGKGHSGGSGGGGSGSGPGIKKTERRARSSPKSNDSDLQEYELEVKRVQDILSGIEKPQVSNIQARAVVLSWAPPVGLSCGPHSGLSFPYSYEVALSDKGRDGKYKIIYSGEELECNLKDLRPATDYHVRVYAMYNSVKGSCSEPVSFTTHSCAPECPFPPKLAHRSKSSLTLQWKAPIDNGSKITNYLLEWDEGKRNSGFRQCFFGSQKHCKLTKLCPAMGYTFRLAARNDIGTSGYSQEVVCYTLGNIPQMPSAPRLVRAGITWVTLQWSKPEGCSPEEVITYTLEIQEDENDNLFHPKYTGEDLTCTVKNLKRSTQYKFRLTASNTEGKSCPSEVLVCTTSPDRPGPPTRPLVKGPVTSHGFSVKWDPPKDNGGSEILKYLLEITDGNSEANQWEVAYSGSATEYTFTHLKPGTLYKLRACCISTGGHSQCSESLPVRTLSIAPGQCRPPRVLGRPKHKEVHLEWDVPASESGCEVSEYSVEMTEPEDVASEVYHGPELECTVGNLLPGTVYRFRVRALNDGGYGPYSDVSEITTAAGPPGQCKAPCISCTPDGCVLVGWESPDSSGADISEYRLEWGEDEESLELIYHGTDTRFEIRDLLPAAQYCCRLQAFNQAGAGPYSELVLCQTPASAPDPVSTLCVLEEEPLDAYPDSPSACLVLNWEEPCNNGSEILAYTIDLGDTSITVGNTTMHVMKDLLPETTYRIRIQAINEIGAGPFSQFIKAKTRPLPPLPPRLECAAAGPQSLKLKWGDSNSKTHAAEDIVYTLQLEDRNKRFISIYRGPSHTYKVQRLTEFTCYSFRIQAASEAGEGPFSETYTFSTTKSVPPTIKAPRVTQLEGNSCEILWETVPSMKGDPVNYILQVLVGRESEYKQVYKGEEATFQISGLQTNTDYRFRVCACRRCLDTSQELSGAFSPSAAFVLQRSEVMLTGDMGSLDDPKMKSMMPTDEQFAAIIVLGFATLSILFAFILQYFLMK</sequence>
<dbReference type="EMBL" id="AB098597">
    <property type="protein sequence ID" value="BAC53727.1"/>
    <property type="molecule type" value="mRNA"/>
</dbReference>
<dbReference type="EMBL" id="AY358146">
    <property type="protein sequence ID" value="AAQ88513.1"/>
    <property type="status" value="ALT_INIT"/>
    <property type="molecule type" value="mRNA"/>
</dbReference>
<dbReference type="EMBL" id="AY358367">
    <property type="protein sequence ID" value="AAQ88733.1"/>
    <property type="status" value="ALT_INIT"/>
    <property type="molecule type" value="mRNA"/>
</dbReference>
<dbReference type="EMBL" id="AK027052">
    <property type="protein sequence ID" value="BAB15639.1"/>
    <property type="status" value="ALT_INIT"/>
    <property type="molecule type" value="mRNA"/>
</dbReference>
<dbReference type="EMBL" id="AK075220">
    <property type="protein sequence ID" value="BAC11480.1"/>
    <property type="status" value="ALT_INIT"/>
    <property type="molecule type" value="mRNA"/>
</dbReference>
<dbReference type="EMBL" id="AK127826">
    <property type="protein sequence ID" value="BAG54580.1"/>
    <property type="molecule type" value="mRNA"/>
</dbReference>
<dbReference type="EMBL" id="AK314478">
    <property type="protein sequence ID" value="BAG37083.1"/>
    <property type="molecule type" value="mRNA"/>
</dbReference>
<dbReference type="EMBL" id="AK223599">
    <property type="protein sequence ID" value="BAD97319.1"/>
    <property type="molecule type" value="mRNA"/>
</dbReference>
<dbReference type="EMBL" id="CH471052">
    <property type="protein sequence ID" value="EAW78476.1"/>
    <property type="molecule type" value="Genomic_DNA"/>
</dbReference>
<dbReference type="EMBL" id="CH471052">
    <property type="protein sequence ID" value="EAW78472.1"/>
    <property type="molecule type" value="Genomic_DNA"/>
</dbReference>
<dbReference type="EMBL" id="CH471052">
    <property type="protein sequence ID" value="EAW78474.1"/>
    <property type="molecule type" value="Genomic_DNA"/>
</dbReference>
<dbReference type="EMBL" id="CH471052">
    <property type="protein sequence ID" value="EAW78475.1"/>
    <property type="molecule type" value="Genomic_DNA"/>
</dbReference>
<dbReference type="EMBL" id="BC012204">
    <property type="protein sequence ID" value="AAH12204.1"/>
    <property type="status" value="ALT_INIT"/>
    <property type="molecule type" value="mRNA"/>
</dbReference>
<dbReference type="EMBL" id="BC033635">
    <property type="protein sequence ID" value="AAH33635.1"/>
    <property type="status" value="ALT_INIT"/>
    <property type="molecule type" value="mRNA"/>
</dbReference>
<dbReference type="EMBL" id="BC039297">
    <property type="protein sequence ID" value="AAH39297.1"/>
    <property type="molecule type" value="mRNA"/>
</dbReference>
<dbReference type="EMBL" id="AF543840">
    <property type="protein sequence ID" value="AAN65261.1"/>
    <property type="molecule type" value="mRNA"/>
</dbReference>
<dbReference type="EMBL" id="AL157482">
    <property type="protein sequence ID" value="CAB75672.1"/>
    <property type="molecule type" value="mRNA"/>
</dbReference>
<dbReference type="CCDS" id="CCDS3217.1">
    <molecule id="Q53EP0-1"/>
</dbReference>
<dbReference type="PIR" id="T46917">
    <property type="entry name" value="T46917"/>
</dbReference>
<dbReference type="RefSeq" id="NP_001128567.1">
    <molecule id="Q53EP0-1"/>
    <property type="nucleotide sequence ID" value="NM_001135095.2"/>
</dbReference>
<dbReference type="RefSeq" id="NP_073600.3">
    <molecule id="Q53EP0-1"/>
    <property type="nucleotide sequence ID" value="NM_022763.3"/>
</dbReference>
<dbReference type="RefSeq" id="XP_024309484.1">
    <molecule id="Q53EP0-1"/>
    <property type="nucleotide sequence ID" value="XM_024453716.2"/>
</dbReference>
<dbReference type="RefSeq" id="XP_024309485.1">
    <molecule id="Q53EP0-1"/>
    <property type="nucleotide sequence ID" value="XM_024453717.2"/>
</dbReference>
<dbReference type="RefSeq" id="XP_047304708.1">
    <molecule id="Q53EP0-1"/>
    <property type="nucleotide sequence ID" value="XM_047448752.1"/>
</dbReference>
<dbReference type="RefSeq" id="XP_047304710.1">
    <molecule id="Q53EP0-1"/>
    <property type="nucleotide sequence ID" value="XM_047448754.1"/>
</dbReference>
<dbReference type="SMR" id="Q53EP0"/>
<dbReference type="BioGRID" id="122288">
    <property type="interactions" value="178"/>
</dbReference>
<dbReference type="FunCoup" id="Q53EP0">
    <property type="interactions" value="762"/>
</dbReference>
<dbReference type="IntAct" id="Q53EP0">
    <property type="interactions" value="77"/>
</dbReference>
<dbReference type="MINT" id="Q53EP0"/>
<dbReference type="STRING" id="9606.ENSP00000411242"/>
<dbReference type="GlyGen" id="Q53EP0">
    <property type="glycosylation" value="1 site, 1 O-linked glycan (1 site)"/>
</dbReference>
<dbReference type="iPTMnet" id="Q53EP0"/>
<dbReference type="PhosphoSitePlus" id="Q53EP0"/>
<dbReference type="SwissPalm" id="Q53EP0"/>
<dbReference type="BioMuta" id="FNDC3B"/>
<dbReference type="DMDM" id="146286181"/>
<dbReference type="jPOST" id="Q53EP0"/>
<dbReference type="MassIVE" id="Q53EP0"/>
<dbReference type="PaxDb" id="9606-ENSP00000338523"/>
<dbReference type="PeptideAtlas" id="Q53EP0"/>
<dbReference type="ProteomicsDB" id="62442">
    <molecule id="Q53EP0-1"/>
</dbReference>
<dbReference type="ProteomicsDB" id="62443">
    <molecule id="Q53EP0-2"/>
</dbReference>
<dbReference type="ProteomicsDB" id="62444">
    <molecule id="Q53EP0-3"/>
</dbReference>
<dbReference type="Pumba" id="Q53EP0"/>
<dbReference type="Antibodypedia" id="2120">
    <property type="antibodies" value="133 antibodies from 23 providers"/>
</dbReference>
<dbReference type="DNASU" id="64778"/>
<dbReference type="Ensembl" id="ENST00000336824.8">
    <molecule id="Q53EP0-1"/>
    <property type="protein sequence ID" value="ENSP00000338523.4"/>
    <property type="gene ID" value="ENSG00000075420.13"/>
</dbReference>
<dbReference type="Ensembl" id="ENST00000415807.7">
    <molecule id="Q53EP0-1"/>
    <property type="protein sequence ID" value="ENSP00000411242.2"/>
    <property type="gene ID" value="ENSG00000075420.13"/>
</dbReference>
<dbReference type="Ensembl" id="ENST00000416957.5">
    <molecule id="Q53EP0-1"/>
    <property type="protein sequence ID" value="ENSP00000389094.1"/>
    <property type="gene ID" value="ENSG00000075420.13"/>
</dbReference>
<dbReference type="Ensembl" id="ENST00000421757.5">
    <molecule id="Q53EP0-3"/>
    <property type="protein sequence ID" value="ENSP00000408496.1"/>
    <property type="gene ID" value="ENSG00000075420.13"/>
</dbReference>
<dbReference type="Ensembl" id="ENST00000423424.5">
    <molecule id="Q53EP0-3"/>
    <property type="protein sequence ID" value="ENSP00000392471.1"/>
    <property type="gene ID" value="ENSG00000075420.13"/>
</dbReference>
<dbReference type="GeneID" id="64778"/>
<dbReference type="KEGG" id="hsa:64778"/>
<dbReference type="MANE-Select" id="ENST00000415807.7">
    <property type="protein sequence ID" value="ENSP00000411242.2"/>
    <property type="RefSeq nucleotide sequence ID" value="NM_022763.4"/>
    <property type="RefSeq protein sequence ID" value="NP_073600.3"/>
</dbReference>
<dbReference type="UCSC" id="uc003fhx.4">
    <molecule id="Q53EP0-1"/>
    <property type="organism name" value="human"/>
</dbReference>
<dbReference type="AGR" id="HGNC:24670"/>
<dbReference type="CTD" id="64778"/>
<dbReference type="DisGeNET" id="64778"/>
<dbReference type="GeneCards" id="FNDC3B"/>
<dbReference type="HGNC" id="HGNC:24670">
    <property type="gene designation" value="FNDC3B"/>
</dbReference>
<dbReference type="HPA" id="ENSG00000075420">
    <property type="expression patterns" value="Low tissue specificity"/>
</dbReference>
<dbReference type="MalaCards" id="FNDC3B"/>
<dbReference type="MIM" id="611909">
    <property type="type" value="gene"/>
</dbReference>
<dbReference type="neXtProt" id="NX_Q53EP0"/>
<dbReference type="OpenTargets" id="ENSG00000075420"/>
<dbReference type="PharmGKB" id="PA134936830"/>
<dbReference type="VEuPathDB" id="HostDB:ENSG00000075420"/>
<dbReference type="eggNOG" id="KOG0613">
    <property type="taxonomic scope" value="Eukaryota"/>
</dbReference>
<dbReference type="GeneTree" id="ENSGT00940000157005"/>
<dbReference type="HOGENOM" id="CLU_2739328_0_0_1"/>
<dbReference type="InParanoid" id="Q53EP0"/>
<dbReference type="OMA" id="NACEIAW"/>
<dbReference type="OrthoDB" id="443915at2759"/>
<dbReference type="PAN-GO" id="Q53EP0">
    <property type="GO annotations" value="0 GO annotations based on evolutionary models"/>
</dbReference>
<dbReference type="PhylomeDB" id="Q53EP0"/>
<dbReference type="TreeFam" id="TF316401"/>
<dbReference type="PathwayCommons" id="Q53EP0"/>
<dbReference type="SignaLink" id="Q53EP0"/>
<dbReference type="BioGRID-ORCS" id="64778">
    <property type="hits" value="52 hits in 1182 CRISPR screens"/>
</dbReference>
<dbReference type="CD-CODE" id="232F8A39">
    <property type="entry name" value="P-body"/>
</dbReference>
<dbReference type="CD-CODE" id="DEE660B4">
    <property type="entry name" value="Stress granule"/>
</dbReference>
<dbReference type="ChiTaRS" id="FNDC3B">
    <property type="organism name" value="human"/>
</dbReference>
<dbReference type="GenomeRNAi" id="64778"/>
<dbReference type="Pharos" id="Q53EP0">
    <property type="development level" value="Tbio"/>
</dbReference>
<dbReference type="PRO" id="PR:Q53EP0"/>
<dbReference type="Proteomes" id="UP000005640">
    <property type="component" value="Chromosome 3"/>
</dbReference>
<dbReference type="RNAct" id="Q53EP0">
    <property type="molecule type" value="protein"/>
</dbReference>
<dbReference type="Bgee" id="ENSG00000075420">
    <property type="expression patterns" value="Expressed in cartilage tissue and 204 other cell types or tissues"/>
</dbReference>
<dbReference type="ExpressionAtlas" id="Q53EP0">
    <property type="expression patterns" value="baseline and differential"/>
</dbReference>
<dbReference type="GO" id="GO:0016020">
    <property type="term" value="C:membrane"/>
    <property type="evidence" value="ECO:0007669"/>
    <property type="project" value="UniProtKB-SubCell"/>
</dbReference>
<dbReference type="GO" id="GO:0003723">
    <property type="term" value="F:RNA binding"/>
    <property type="evidence" value="ECO:0007005"/>
    <property type="project" value="UniProtKB"/>
</dbReference>
<dbReference type="CDD" id="cd00063">
    <property type="entry name" value="FN3"/>
    <property type="match status" value="9"/>
</dbReference>
<dbReference type="FunFam" id="2.60.40.10:FF:000175">
    <property type="entry name" value="Fibronectin type III domain containing 3A"/>
    <property type="match status" value="1"/>
</dbReference>
<dbReference type="FunFam" id="2.60.40.10:FF:000180">
    <property type="entry name" value="Fibronectin type III domain containing 3A"/>
    <property type="match status" value="1"/>
</dbReference>
<dbReference type="FunFam" id="2.60.40.10:FF:000185">
    <property type="entry name" value="Fibronectin type III domain containing 3A"/>
    <property type="match status" value="1"/>
</dbReference>
<dbReference type="FunFam" id="2.60.40.10:FF:000195">
    <property type="entry name" value="Fibronectin type III domain containing 3A"/>
    <property type="match status" value="1"/>
</dbReference>
<dbReference type="FunFam" id="2.60.40.10:FF:000210">
    <property type="entry name" value="Fibronectin type III domain containing 3A"/>
    <property type="match status" value="1"/>
</dbReference>
<dbReference type="FunFam" id="2.60.40.10:FF:000309">
    <property type="entry name" value="Fibronectin type III domain containing 3B"/>
    <property type="match status" value="1"/>
</dbReference>
<dbReference type="FunFam" id="2.60.40.10:FF:000396">
    <property type="entry name" value="Fibronectin type III domain containing 3B"/>
    <property type="match status" value="1"/>
</dbReference>
<dbReference type="FunFam" id="2.60.40.10:FF:000603">
    <property type="entry name" value="Fibronectin type III domain containing 3B"/>
    <property type="match status" value="1"/>
</dbReference>
<dbReference type="FunFam" id="2.60.40.10:FF:000337">
    <property type="entry name" value="fibronectin type-III domain-containing protein 3A isoform X2"/>
    <property type="match status" value="1"/>
</dbReference>
<dbReference type="Gene3D" id="2.60.40.10">
    <property type="entry name" value="Immunoglobulins"/>
    <property type="match status" value="9"/>
</dbReference>
<dbReference type="InterPro" id="IPR050617">
    <property type="entry name" value="E3_ligase_FN3/SPRY"/>
</dbReference>
<dbReference type="InterPro" id="IPR003961">
    <property type="entry name" value="FN3_dom"/>
</dbReference>
<dbReference type="InterPro" id="IPR036116">
    <property type="entry name" value="FN3_sf"/>
</dbReference>
<dbReference type="InterPro" id="IPR013783">
    <property type="entry name" value="Ig-like_fold"/>
</dbReference>
<dbReference type="PANTHER" id="PTHR24099">
    <property type="entry name" value="E3 UBIQUITIN-PROTEIN LIGASE TRIM36-RELATED"/>
    <property type="match status" value="1"/>
</dbReference>
<dbReference type="PANTHER" id="PTHR24099:SF11">
    <property type="entry name" value="FIBRONECTIN TYPE III DOMAIN-CONTAINING 3BA-RELATED"/>
    <property type="match status" value="1"/>
</dbReference>
<dbReference type="Pfam" id="PF00041">
    <property type="entry name" value="fn3"/>
    <property type="match status" value="8"/>
</dbReference>
<dbReference type="PRINTS" id="PR00014">
    <property type="entry name" value="FNTYPEIII"/>
</dbReference>
<dbReference type="SMART" id="SM00060">
    <property type="entry name" value="FN3"/>
    <property type="match status" value="9"/>
</dbReference>
<dbReference type="SUPFAM" id="SSF49265">
    <property type="entry name" value="Fibronectin type III"/>
    <property type="match status" value="5"/>
</dbReference>
<dbReference type="PROSITE" id="PS50853">
    <property type="entry name" value="FN3"/>
    <property type="match status" value="9"/>
</dbReference>
<keyword id="KW-0025">Alternative splicing</keyword>
<keyword id="KW-0472">Membrane</keyword>
<keyword id="KW-0597">Phosphoprotein</keyword>
<keyword id="KW-1267">Proteomics identification</keyword>
<keyword id="KW-1185">Reference proteome</keyword>
<keyword id="KW-0677">Repeat</keyword>
<keyword id="KW-0812">Transmembrane</keyword>
<keyword id="KW-1133">Transmembrane helix</keyword>
<gene>
    <name type="primary">FNDC3B</name>
    <name type="synonym">FAD104</name>
    <name type="synonym">NS5ABP37</name>
    <name type="ORF">UNQ2421/PRO4979/PRO34274</name>
</gene>
<comment type="function">
    <text evidence="9">May be a positive regulator of adipogenesis.</text>
</comment>
<comment type="interaction">
    <interactant intactId="EBI-10242151">
        <id>Q53EP0-3</id>
    </interactant>
    <interactant intactId="EBI-12318443">
        <id>Q8NFV4-4</id>
        <label>ABHD11</label>
    </interactant>
    <organismsDiffer>false</organismsDiffer>
    <experiments>3</experiments>
</comment>
<comment type="interaction">
    <interactant intactId="EBI-10242151">
        <id>Q53EP0-3</id>
    </interactant>
    <interactant intactId="EBI-17180442">
        <id>Q96I13</id>
        <label>ABHD8</label>
    </interactant>
    <organismsDiffer>false</organismsDiffer>
    <experiments>3</experiments>
</comment>
<comment type="interaction">
    <interactant intactId="EBI-10242151">
        <id>Q53EP0-3</id>
    </interactant>
    <interactant intactId="EBI-11976299">
        <id>Q5BKX5-3</id>
        <label>ACTMAP</label>
    </interactant>
    <organismsDiffer>false</organismsDiffer>
    <experiments>3</experiments>
</comment>
<comment type="interaction">
    <interactant intactId="EBI-10242151">
        <id>Q53EP0-3</id>
    </interactant>
    <interactant intactId="EBI-7600130">
        <id>Q8IZF2</id>
        <label>ADGRF5</label>
    </interactant>
    <organismsDiffer>false</organismsDiffer>
    <experiments>3</experiments>
</comment>
<comment type="interaction">
    <interactant intactId="EBI-10242151">
        <id>Q53EP0-3</id>
    </interactant>
    <interactant intactId="EBI-748297">
        <id>Q9BXC9</id>
        <label>BBS2</label>
    </interactant>
    <organismsDiffer>false</organismsDiffer>
    <experiments>3</experiments>
</comment>
<comment type="interaction">
    <interactant intactId="EBI-10242151">
        <id>Q53EP0-3</id>
    </interactant>
    <interactant intactId="EBI-1012434">
        <id>Q6AI39</id>
        <label>BICRAL</label>
    </interactant>
    <organismsDiffer>false</organismsDiffer>
    <experiments>3</experiments>
</comment>
<comment type="interaction">
    <interactant intactId="EBI-10242151">
        <id>Q53EP0-3</id>
    </interactant>
    <interactant intactId="EBI-10693038">
        <id>Q9NSI6-4</id>
        <label>BRWD1</label>
    </interactant>
    <organismsDiffer>false</organismsDiffer>
    <experiments>3</experiments>
</comment>
<comment type="interaction">
    <interactant intactId="EBI-10242151">
        <id>Q53EP0-3</id>
    </interactant>
    <interactant intactId="EBI-12809220">
        <id>Q5SWW7</id>
        <label>C10orf55</label>
    </interactant>
    <organismsDiffer>false</organismsDiffer>
    <experiments>3</experiments>
</comment>
<comment type="interaction">
    <interactant intactId="EBI-10242151">
        <id>Q53EP0-3</id>
    </interactant>
    <interactant intactId="EBI-12030460">
        <id>Q8WYQ4-2</id>
        <label>C22orf15</label>
    </interactant>
    <organismsDiffer>false</organismsDiffer>
    <experiments>3</experiments>
</comment>
<comment type="interaction">
    <interactant intactId="EBI-10242151">
        <id>Q53EP0-3</id>
    </interactant>
    <interactant intactId="EBI-351018">
        <id>Q13557</id>
        <label>CAMK2D</label>
    </interactant>
    <organismsDiffer>false</organismsDiffer>
    <experiments>3</experiments>
</comment>
<comment type="interaction">
    <interactant intactId="EBI-10242151">
        <id>Q53EP0-3</id>
    </interactant>
    <interactant intactId="EBI-12907646">
        <id>Q6PRD7</id>
        <label>CEMP1</label>
    </interactant>
    <organismsDiffer>false</organismsDiffer>
    <experiments>3</experiments>
</comment>
<comment type="interaction">
    <interactant intactId="EBI-10242151">
        <id>Q53EP0-3</id>
    </interactant>
    <interactant intactId="EBI-12840152">
        <id>A0PJW8</id>
        <label>DAPL1</label>
    </interactant>
    <organismsDiffer>false</organismsDiffer>
    <experiments>3</experiments>
</comment>
<comment type="interaction">
    <interactant intactId="EBI-10242151">
        <id>Q53EP0-3</id>
    </interactant>
    <interactant intactId="EBI-3443946">
        <id>Q9Y6W6</id>
        <label>DUSP10</label>
    </interactant>
    <organismsDiffer>false</organismsDiffer>
    <experiments>3</experiments>
</comment>
<comment type="interaction">
    <interactant intactId="EBI-10242151">
        <id>Q53EP0-3</id>
    </interactant>
    <interactant intactId="EBI-9248152">
        <id>Q86XJ1</id>
        <label>GAS2L3</label>
    </interactant>
    <organismsDiffer>false</organismsDiffer>
    <experiments>3</experiments>
</comment>
<comment type="interaction">
    <interactant intactId="EBI-10242151">
        <id>Q53EP0-3</id>
    </interactant>
    <interactant intactId="EBI-11956675">
        <id>Q9GZV7</id>
        <label>HAPLN2</label>
    </interactant>
    <organismsDiffer>false</organismsDiffer>
    <experiments>3</experiments>
</comment>
<comment type="interaction">
    <interactant intactId="EBI-10242151">
        <id>Q53EP0-3</id>
    </interactant>
    <interactant intactId="EBI-9478422">
        <id>Q96G42</id>
        <label>KLHDC7B</label>
    </interactant>
    <organismsDiffer>false</organismsDiffer>
    <experiments>3</experiments>
</comment>
<comment type="interaction">
    <interactant intactId="EBI-10242151">
        <id>Q53EP0-3</id>
    </interactant>
    <interactant intactId="EBI-1052037">
        <id>Q8IUC1</id>
        <label>KRTAP11-1</label>
    </interactant>
    <organismsDiffer>false</organismsDiffer>
    <experiments>3</experiments>
</comment>
<comment type="interaction">
    <interactant intactId="EBI-10242151">
        <id>Q53EP0-3</id>
    </interactant>
    <interactant intactId="EBI-11985629">
        <id>Q96JM7-2</id>
        <label>L3MBTL3</label>
    </interactant>
    <organismsDiffer>false</organismsDiffer>
    <experiments>3</experiments>
</comment>
<comment type="interaction">
    <interactant intactId="EBI-10242151">
        <id>Q53EP0-3</id>
    </interactant>
    <interactant intactId="EBI-12516603">
        <id>Q8WWY6</id>
        <label>MBD3L1</label>
    </interactant>
    <organismsDiffer>false</organismsDiffer>
    <experiments>3</experiments>
</comment>
<comment type="interaction">
    <interactant intactId="EBI-10242151">
        <id>Q53EP0-3</id>
    </interactant>
    <interactant intactId="EBI-11987923">
        <id>P59942</id>
        <label>MCCD1</label>
    </interactant>
    <organismsDiffer>false</organismsDiffer>
    <experiments>3</experiments>
</comment>
<comment type="interaction">
    <interactant intactId="EBI-10242151">
        <id>Q53EP0-3</id>
    </interactant>
    <interactant intactId="EBI-2816254">
        <id>Q14764</id>
        <label>MVP</label>
    </interactant>
    <organismsDiffer>false</organismsDiffer>
    <experiments>3</experiments>
</comment>
<comment type="interaction">
    <interactant intactId="EBI-10242151">
        <id>Q53EP0-3</id>
    </interactant>
    <interactant intactId="EBI-1246261">
        <id>O14561</id>
        <label>NDUFAB1</label>
    </interactant>
    <organismsDiffer>false</organismsDiffer>
    <experiments>5</experiments>
</comment>
<comment type="interaction">
    <interactant intactId="EBI-10242151">
        <id>Q53EP0-3</id>
    </interactant>
    <interactant intactId="EBI-1046979">
        <id>Q99570</id>
        <label>PIK3R4</label>
    </interactant>
    <organismsDiffer>false</organismsDiffer>
    <experiments>3</experiments>
</comment>
<comment type="interaction">
    <interactant intactId="EBI-10242151">
        <id>Q53EP0-3</id>
    </interactant>
    <interactant intactId="EBI-1389308">
        <id>Q7Z3K3</id>
        <label>POGZ</label>
    </interactant>
    <organismsDiffer>false</organismsDiffer>
    <experiments>6</experiments>
</comment>
<comment type="interaction">
    <interactant intactId="EBI-10242151">
        <id>Q53EP0-3</id>
    </interactant>
    <interactant intactId="EBI-12029004">
        <id>P78424</id>
        <label>POU6F2</label>
    </interactant>
    <organismsDiffer>false</organismsDiffer>
    <experiments>3</experiments>
</comment>
<comment type="interaction">
    <interactant intactId="EBI-10242151">
        <id>Q53EP0-3</id>
    </interactant>
    <interactant intactId="EBI-1383852">
        <id>P54646</id>
        <label>PRKAA2</label>
    </interactant>
    <organismsDiffer>false</organismsDiffer>
    <experiments>3</experiments>
</comment>
<comment type="interaction">
    <interactant intactId="EBI-10242151">
        <id>Q53EP0-3</id>
    </interactant>
    <interactant intactId="EBI-10829018">
        <id>Q04864-2</id>
        <label>REL</label>
    </interactant>
    <organismsDiffer>false</organismsDiffer>
    <experiments>3</experiments>
</comment>
<comment type="interaction">
    <interactant intactId="EBI-10242151">
        <id>Q53EP0-3</id>
    </interactant>
    <interactant intactId="EBI-6257312">
        <id>Q9BVN2</id>
        <label>RUSC1</label>
    </interactant>
    <organismsDiffer>false</organismsDiffer>
    <experiments>3</experiments>
</comment>
<comment type="interaction">
    <interactant intactId="EBI-10242151">
        <id>Q53EP0-3</id>
    </interactant>
    <interactant intactId="EBI-18115728">
        <id>Q6ZNM6</id>
        <label>SPMIP10</label>
    </interactant>
    <organismsDiffer>false</organismsDiffer>
    <experiments>3</experiments>
</comment>
<comment type="interaction">
    <interactant intactId="EBI-10242151">
        <id>Q53EP0-3</id>
    </interactant>
    <interactant intactId="EBI-12831628">
        <id>Q8WW14-2</id>
        <label>SPMIP5</label>
    </interactant>
    <organismsDiffer>false</organismsDiffer>
    <experiments>3</experiments>
</comment>
<comment type="interaction">
    <interactant intactId="EBI-10242151">
        <id>Q53EP0-3</id>
    </interactant>
    <interactant intactId="EBI-2323209">
        <id>Q99619</id>
        <label>SPSB2</label>
    </interactant>
    <organismsDiffer>false</organismsDiffer>
    <experiments>3</experiments>
</comment>
<comment type="interaction">
    <interactant intactId="EBI-10242151">
        <id>Q53EP0-3</id>
    </interactant>
    <interactant intactId="EBI-17858294">
        <id>Q8NEQ6</id>
        <label>SRARP</label>
    </interactant>
    <organismsDiffer>false</organismsDiffer>
    <experiments>3</experiments>
</comment>
<comment type="interaction">
    <interactant intactId="EBI-10242151">
        <id>Q53EP0-3</id>
    </interactant>
    <interactant intactId="EBI-12871202">
        <id>Q8N801-2</id>
        <label>STPG4</label>
    </interactant>
    <organismsDiffer>false</organismsDiffer>
    <experiments>3</experiments>
</comment>
<comment type="interaction">
    <interactant intactId="EBI-10242151">
        <id>Q53EP0-3</id>
    </interactant>
    <interactant intactId="EBI-3921347">
        <id>P51687</id>
        <label>SUOX</label>
    </interactant>
    <organismsDiffer>false</organismsDiffer>
    <experiments>3</experiments>
</comment>
<comment type="interaction">
    <interactant intactId="EBI-10242151">
        <id>Q53EP0-3</id>
    </interactant>
    <interactant intactId="EBI-10239812">
        <id>Q96M29</id>
        <label>TEKT5</label>
    </interactant>
    <organismsDiffer>false</organismsDiffer>
    <experiments>3</experiments>
</comment>
<comment type="interaction">
    <interactant intactId="EBI-10242151">
        <id>Q53EP0-3</id>
    </interactant>
    <interactant intactId="EBI-11139477">
        <id>Q96N21</id>
        <label>TEPSIN</label>
    </interactant>
    <organismsDiffer>false</organismsDiffer>
    <experiments>3</experiments>
</comment>
<comment type="interaction">
    <interactant intactId="EBI-10242151">
        <id>Q53EP0-3</id>
    </interactant>
    <interactant intactId="EBI-12840664">
        <id>Q9Y4I5-2</id>
        <label>TESMIN</label>
    </interactant>
    <organismsDiffer>false</organismsDiffer>
    <experiments>3</experiments>
</comment>
<comment type="interaction">
    <interactant intactId="EBI-10242151">
        <id>Q53EP0-3</id>
    </interactant>
    <interactant intactId="EBI-18583507">
        <id>A0A1B0GUV7</id>
        <label>TEX48</label>
    </interactant>
    <organismsDiffer>false</organismsDiffer>
    <experiments>3</experiments>
</comment>
<comment type="interaction">
    <interactant intactId="EBI-10242151">
        <id>Q53EP0-3</id>
    </interactant>
    <interactant intactId="EBI-948613">
        <id>O94842</id>
        <label>TOX4</label>
    </interactant>
    <organismsDiffer>false</organismsDiffer>
    <experiments>6</experiments>
</comment>
<comment type="interaction">
    <interactant intactId="EBI-10242151">
        <id>Q53EP0-3</id>
    </interactant>
    <interactant intactId="EBI-355744">
        <id>Q12933</id>
        <label>TRAF2</label>
    </interactant>
    <organismsDiffer>false</organismsDiffer>
    <experiments>3</experiments>
</comment>
<comment type="interaction">
    <interactant intactId="EBI-10242151">
        <id>Q53EP0-3</id>
    </interactant>
    <interactant intactId="EBI-17716262">
        <id>Q9UPQ4-2</id>
        <label>TRIM35</label>
    </interactant>
    <organismsDiffer>false</organismsDiffer>
    <experiments>3</experiments>
</comment>
<comment type="interaction">
    <interactant intactId="EBI-10242151">
        <id>Q53EP0-3</id>
    </interactant>
    <interactant intactId="EBI-5235829">
        <id>Q8IWZ5</id>
        <label>TRIM42</label>
    </interactant>
    <organismsDiffer>false</organismsDiffer>
    <experiments>3</experiments>
</comment>
<comment type="interaction">
    <interactant intactId="EBI-10242151">
        <id>Q53EP0-3</id>
    </interactant>
    <interactant intactId="EBI-358993">
        <id>Q15645</id>
        <label>TRIP13</label>
    </interactant>
    <organismsDiffer>false</organismsDiffer>
    <experiments>6</experiments>
</comment>
<comment type="interaction">
    <interactant intactId="EBI-10242151">
        <id>Q53EP0-3</id>
    </interactant>
    <interactant intactId="EBI-2514383">
        <id>Q5T6F2</id>
        <label>UBAP2</label>
    </interactant>
    <organismsDiffer>false</organismsDiffer>
    <experiments>3</experiments>
</comment>
<comment type="interaction">
    <interactant intactId="EBI-10242151">
        <id>Q53EP0-3</id>
    </interactant>
    <interactant intactId="EBI-11975223">
        <id>Q70EL1-9</id>
        <label>USP54</label>
    </interactant>
    <organismsDiffer>false</organismsDiffer>
    <experiments>3</experiments>
</comment>
<comment type="interaction">
    <interactant intactId="EBI-10242151">
        <id>Q53EP0-3</id>
    </interactant>
    <interactant intactId="EBI-2107455">
        <id>Q08AM6</id>
        <label>VAC14</label>
    </interactant>
    <organismsDiffer>false</organismsDiffer>
    <experiments>3</experiments>
</comment>
<comment type="interaction">
    <interactant intactId="EBI-10242151">
        <id>Q53EP0-3</id>
    </interactant>
    <interactant intactId="EBI-746595">
        <id>Q96E35</id>
        <label>ZMYND19</label>
    </interactant>
    <organismsDiffer>false</organismsDiffer>
    <experiments>3</experiments>
</comment>
<comment type="subcellular location">
    <subcellularLocation>
        <location evidence="1">Membrane</location>
        <topology evidence="1">Single-pass membrane protein</topology>
    </subcellularLocation>
</comment>
<comment type="alternative products">
    <event type="alternative splicing"/>
    <isoform>
        <id>Q53EP0-1</id>
        <name>1</name>
        <sequence type="displayed"/>
    </isoform>
    <isoform>
        <id>Q53EP0-2</id>
        <name>2</name>
        <sequence type="described" ref="VSP_024741 VSP_024742"/>
    </isoform>
    <isoform>
        <id>Q53EP0-3</id>
        <name>3</name>
        <sequence type="described" ref="VSP_024739 VSP_024740"/>
    </isoform>
</comment>
<comment type="tissue specificity">
    <text evidence="9">Predominantly expressed in white adipose tissue (WAT) especially in the stromal vascular cells. Expressed in adipocyte differentiable 3T3-L1 cells but not in the non-adipogenic cell line NIH-3T3. Expression increased in the early stage of adipogenesis.</text>
</comment>
<comment type="similarity">
    <text evidence="14">Belongs to the FNDC3 family.</text>
</comment>
<comment type="sequence caution" evidence="14">
    <conflict type="erroneous initiation">
        <sequence resource="EMBL-CDS" id="AAH12204"/>
    </conflict>
</comment>
<comment type="sequence caution" evidence="14">
    <conflict type="erroneous initiation">
        <sequence resource="EMBL-CDS" id="AAH33635"/>
    </conflict>
</comment>
<comment type="sequence caution" evidence="14">
    <conflict type="erroneous initiation">
        <sequence resource="EMBL-CDS" id="AAQ88513"/>
    </conflict>
</comment>
<comment type="sequence caution" evidence="14">
    <conflict type="erroneous initiation">
        <sequence resource="EMBL-CDS" id="AAQ88733"/>
    </conflict>
</comment>
<comment type="sequence caution" evidence="14">
    <conflict type="erroneous initiation">
        <sequence resource="EMBL-CDS" id="BAB15639"/>
    </conflict>
</comment>
<comment type="sequence caution" evidence="14">
    <conflict type="erroneous initiation">
        <sequence resource="EMBL-CDS" id="BAC11480"/>
    </conflict>
</comment>
<accession>Q53EP0</accession>
<accession>B2RB36</accession>
<accession>B3KXR8</accession>
<accession>D3DNQ7</accession>
<accession>Q5U5T8</accession>
<accession>Q6PIJ3</accession>
<accession>Q6UXG1</accession>
<accession>Q6UXZ5</accession>
<accession>Q8IXB2</accession>
<accession>Q8NBU7</accession>
<accession>Q96D78</accession>
<accession>Q9H5I7</accession>
<accession>Q9NSQ8</accession>
<evidence type="ECO:0000250" key="1"/>
<evidence type="ECO:0000250" key="2">
    <source>
        <dbReference type="UniProtKB" id="Q6NWW9"/>
    </source>
</evidence>
<evidence type="ECO:0000255" key="3"/>
<evidence type="ECO:0000255" key="4">
    <source>
        <dbReference type="PROSITE-ProRule" id="PRU00316"/>
    </source>
</evidence>
<evidence type="ECO:0000256" key="5">
    <source>
        <dbReference type="SAM" id="MobiDB-lite"/>
    </source>
</evidence>
<evidence type="ECO:0000269" key="6">
    <source>
    </source>
</evidence>
<evidence type="ECO:0000269" key="7">
    <source>
    </source>
</evidence>
<evidence type="ECO:0000269" key="8">
    <source>
    </source>
</evidence>
<evidence type="ECO:0000269" key="9">
    <source>
    </source>
</evidence>
<evidence type="ECO:0000269" key="10">
    <source>
    </source>
</evidence>
<evidence type="ECO:0000269" key="11">
    <source ref="5"/>
</evidence>
<evidence type="ECO:0000303" key="12">
    <source>
    </source>
</evidence>
<evidence type="ECO:0000303" key="13">
    <source>
    </source>
</evidence>
<evidence type="ECO:0000305" key="14"/>
<evidence type="ECO:0007744" key="15">
    <source>
    </source>
</evidence>
<evidence type="ECO:0007744" key="16">
    <source>
    </source>
</evidence>
<organism>
    <name type="scientific">Homo sapiens</name>
    <name type="common">Human</name>
    <dbReference type="NCBI Taxonomy" id="9606"/>
    <lineage>
        <taxon>Eukaryota</taxon>
        <taxon>Metazoa</taxon>
        <taxon>Chordata</taxon>
        <taxon>Craniata</taxon>
        <taxon>Vertebrata</taxon>
        <taxon>Euteleostomi</taxon>
        <taxon>Mammalia</taxon>
        <taxon>Eutheria</taxon>
        <taxon>Euarchontoglires</taxon>
        <taxon>Primates</taxon>
        <taxon>Haplorrhini</taxon>
        <taxon>Catarrhini</taxon>
        <taxon>Hominidae</taxon>
        <taxon>Homo</taxon>
    </lineage>
</organism>
<protein>
    <recommendedName>
        <fullName>Fibronectin type III domain-containing protein 3B</fullName>
    </recommendedName>
    <alternativeName>
        <fullName>Factor for adipocyte differentiation 104</fullName>
    </alternativeName>
    <alternativeName>
        <fullName>HCV NS5A-binding protein 37</fullName>
    </alternativeName>
</protein>
<reference key="1">
    <citation type="journal article" date="2004" name="J. Cell Sci.">
        <title>Fad24, a mammalian homolog of Noc3p, is a positive regulator in adipocyte differentiation.</title>
        <authorList>
            <person name="Tominaga K."/>
            <person name="Johmura Y."/>
            <person name="Nishizuka M."/>
            <person name="Imagawa M."/>
        </authorList>
    </citation>
    <scope>NUCLEOTIDE SEQUENCE [MRNA] (ISOFORM 1)</scope>
    <scope>TISSUE SPECIFICITY</scope>
    <scope>FUNCTION</scope>
    <scope>VARIANT SER-179</scope>
    <source>
        <tissue>Carcinoma</tissue>
    </source>
</reference>
<reference key="2">
    <citation type="journal article" date="2003" name="Genome Res.">
        <title>The secreted protein discovery initiative (SPDI), a large-scale effort to identify novel human secreted and transmembrane proteins: a bioinformatics assessment.</title>
        <authorList>
            <person name="Clark H.F."/>
            <person name="Gurney A.L."/>
            <person name="Abaya E."/>
            <person name="Baker K."/>
            <person name="Baldwin D.T."/>
            <person name="Brush J."/>
            <person name="Chen J."/>
            <person name="Chow B."/>
            <person name="Chui C."/>
            <person name="Crowley C."/>
            <person name="Currell B."/>
            <person name="Deuel B."/>
            <person name="Dowd P."/>
            <person name="Eaton D."/>
            <person name="Foster J.S."/>
            <person name="Grimaldi C."/>
            <person name="Gu Q."/>
            <person name="Hass P.E."/>
            <person name="Heldens S."/>
            <person name="Huang A."/>
            <person name="Kim H.S."/>
            <person name="Klimowski L."/>
            <person name="Jin Y."/>
            <person name="Johnson S."/>
            <person name="Lee J."/>
            <person name="Lewis L."/>
            <person name="Liao D."/>
            <person name="Mark M.R."/>
            <person name="Robbie E."/>
            <person name="Sanchez C."/>
            <person name="Schoenfeld J."/>
            <person name="Seshagiri S."/>
            <person name="Simmons L."/>
            <person name="Singh J."/>
            <person name="Smith V."/>
            <person name="Stinson J."/>
            <person name="Vagts A."/>
            <person name="Vandlen R.L."/>
            <person name="Watanabe C."/>
            <person name="Wieand D."/>
            <person name="Woods K."/>
            <person name="Xie M.-H."/>
            <person name="Yansura D.G."/>
            <person name="Yi S."/>
            <person name="Yu G."/>
            <person name="Yuan J."/>
            <person name="Zhang M."/>
            <person name="Zhang Z."/>
            <person name="Goddard A.D."/>
            <person name="Wood W.I."/>
            <person name="Godowski P.J."/>
            <person name="Gray A.M."/>
        </authorList>
    </citation>
    <scope>NUCLEOTIDE SEQUENCE [LARGE SCALE MRNA] (ISOFORM 2)</scope>
    <scope>NUCLEOTIDE SEQUENCE [LARGE SCALE MRNA] OF 320-1204 (ISOFORM 1)</scope>
    <scope>VARIANT SER-179</scope>
</reference>
<reference key="3">
    <citation type="journal article" date="2004" name="Nat. Genet.">
        <title>Complete sequencing and characterization of 21,243 full-length human cDNAs.</title>
        <authorList>
            <person name="Ota T."/>
            <person name="Suzuki Y."/>
            <person name="Nishikawa T."/>
            <person name="Otsuki T."/>
            <person name="Sugiyama T."/>
            <person name="Irie R."/>
            <person name="Wakamatsu A."/>
            <person name="Hayashi K."/>
            <person name="Sato H."/>
            <person name="Nagai K."/>
            <person name="Kimura K."/>
            <person name="Makita H."/>
            <person name="Sekine M."/>
            <person name="Obayashi M."/>
            <person name="Nishi T."/>
            <person name="Shibahara T."/>
            <person name="Tanaka T."/>
            <person name="Ishii S."/>
            <person name="Yamamoto J."/>
            <person name="Saito K."/>
            <person name="Kawai Y."/>
            <person name="Isono Y."/>
            <person name="Nakamura Y."/>
            <person name="Nagahari K."/>
            <person name="Murakami K."/>
            <person name="Yasuda T."/>
            <person name="Iwayanagi T."/>
            <person name="Wagatsuma M."/>
            <person name="Shiratori A."/>
            <person name="Sudo H."/>
            <person name="Hosoiri T."/>
            <person name="Kaku Y."/>
            <person name="Kodaira H."/>
            <person name="Kondo H."/>
            <person name="Sugawara M."/>
            <person name="Takahashi M."/>
            <person name="Kanda K."/>
            <person name="Yokoi T."/>
            <person name="Furuya T."/>
            <person name="Kikkawa E."/>
            <person name="Omura Y."/>
            <person name="Abe K."/>
            <person name="Kamihara K."/>
            <person name="Katsuta N."/>
            <person name="Sato K."/>
            <person name="Tanikawa M."/>
            <person name="Yamazaki M."/>
            <person name="Ninomiya K."/>
            <person name="Ishibashi T."/>
            <person name="Yamashita H."/>
            <person name="Murakawa K."/>
            <person name="Fujimori K."/>
            <person name="Tanai H."/>
            <person name="Kimata M."/>
            <person name="Watanabe M."/>
            <person name="Hiraoka S."/>
            <person name="Chiba Y."/>
            <person name="Ishida S."/>
            <person name="Ono Y."/>
            <person name="Takiguchi S."/>
            <person name="Watanabe S."/>
            <person name="Yosida M."/>
            <person name="Hotuta T."/>
            <person name="Kusano J."/>
            <person name="Kanehori K."/>
            <person name="Takahashi-Fujii A."/>
            <person name="Hara H."/>
            <person name="Tanase T.-O."/>
            <person name="Nomura Y."/>
            <person name="Togiya S."/>
            <person name="Komai F."/>
            <person name="Hara R."/>
            <person name="Takeuchi K."/>
            <person name="Arita M."/>
            <person name="Imose N."/>
            <person name="Musashino K."/>
            <person name="Yuuki H."/>
            <person name="Oshima A."/>
            <person name="Sasaki N."/>
            <person name="Aotsuka S."/>
            <person name="Yoshikawa Y."/>
            <person name="Matsunawa H."/>
            <person name="Ichihara T."/>
            <person name="Shiohata N."/>
            <person name="Sano S."/>
            <person name="Moriya S."/>
            <person name="Momiyama H."/>
            <person name="Satoh N."/>
            <person name="Takami S."/>
            <person name="Terashima Y."/>
            <person name="Suzuki O."/>
            <person name="Nakagawa S."/>
            <person name="Senoh A."/>
            <person name="Mizoguchi H."/>
            <person name="Goto Y."/>
            <person name="Shimizu F."/>
            <person name="Wakebe H."/>
            <person name="Hishigaki H."/>
            <person name="Watanabe T."/>
            <person name="Sugiyama A."/>
            <person name="Takemoto M."/>
            <person name="Kawakami B."/>
            <person name="Yamazaki M."/>
            <person name="Watanabe K."/>
            <person name="Kumagai A."/>
            <person name="Itakura S."/>
            <person name="Fukuzumi Y."/>
            <person name="Fujimori Y."/>
            <person name="Komiyama M."/>
            <person name="Tashiro H."/>
            <person name="Tanigami A."/>
            <person name="Fujiwara T."/>
            <person name="Ono T."/>
            <person name="Yamada K."/>
            <person name="Fujii Y."/>
            <person name="Ozaki K."/>
            <person name="Hirao M."/>
            <person name="Ohmori Y."/>
            <person name="Kawabata A."/>
            <person name="Hikiji T."/>
            <person name="Kobatake N."/>
            <person name="Inagaki H."/>
            <person name="Ikema Y."/>
            <person name="Okamoto S."/>
            <person name="Okitani R."/>
            <person name="Kawakami T."/>
            <person name="Noguchi S."/>
            <person name="Itoh T."/>
            <person name="Shigeta K."/>
            <person name="Senba T."/>
            <person name="Matsumura K."/>
            <person name="Nakajima Y."/>
            <person name="Mizuno T."/>
            <person name="Morinaga M."/>
            <person name="Sasaki M."/>
            <person name="Togashi T."/>
            <person name="Oyama M."/>
            <person name="Hata H."/>
            <person name="Watanabe M."/>
            <person name="Komatsu T."/>
            <person name="Mizushima-Sugano J."/>
            <person name="Satoh T."/>
            <person name="Shirai Y."/>
            <person name="Takahashi Y."/>
            <person name="Nakagawa K."/>
            <person name="Okumura K."/>
            <person name="Nagase T."/>
            <person name="Nomura N."/>
            <person name="Kikuchi H."/>
            <person name="Masuho Y."/>
            <person name="Yamashita R."/>
            <person name="Nakai K."/>
            <person name="Yada T."/>
            <person name="Nakamura Y."/>
            <person name="Ohara O."/>
            <person name="Isogai T."/>
            <person name="Sugano S."/>
        </authorList>
    </citation>
    <scope>NUCLEOTIDE SEQUENCE [LARGE SCALE MRNA] (ISOFORM 1)</scope>
    <scope>VARIANT SER-179</scope>
    <source>
        <tissue>Placenta</tissue>
        <tissue>Trachea</tissue>
    </source>
</reference>
<reference key="4">
    <citation type="submission" date="2005-04" db="EMBL/GenBank/DDBJ databases">
        <authorList>
            <person name="Totoki Y."/>
            <person name="Toyoda A."/>
            <person name="Takeda T."/>
            <person name="Sakaki Y."/>
            <person name="Tanaka A."/>
            <person name="Yokoyama S."/>
        </authorList>
    </citation>
    <scope>NUCLEOTIDE SEQUENCE [LARGE SCALE MRNA] (ISOFORM 1)</scope>
    <source>
        <tissue>Kidney</tissue>
    </source>
</reference>
<reference key="5">
    <citation type="submission" date="2005-09" db="EMBL/GenBank/DDBJ databases">
        <authorList>
            <person name="Mural R.J."/>
            <person name="Istrail S."/>
            <person name="Sutton G.G."/>
            <person name="Florea L."/>
            <person name="Halpern A.L."/>
            <person name="Mobarry C.M."/>
            <person name="Lippert R."/>
            <person name="Walenz B."/>
            <person name="Shatkay H."/>
            <person name="Dew I."/>
            <person name="Miller J.R."/>
            <person name="Flanigan M.J."/>
            <person name="Edwards N.J."/>
            <person name="Bolanos R."/>
            <person name="Fasulo D."/>
            <person name="Halldorsson B.V."/>
            <person name="Hannenhalli S."/>
            <person name="Turner R."/>
            <person name="Yooseph S."/>
            <person name="Lu F."/>
            <person name="Nusskern D.R."/>
            <person name="Shue B.C."/>
            <person name="Zheng X.H."/>
            <person name="Zhong F."/>
            <person name="Delcher A.L."/>
            <person name="Huson D.H."/>
            <person name="Kravitz S.A."/>
            <person name="Mouchard L."/>
            <person name="Reinert K."/>
            <person name="Remington K.A."/>
            <person name="Clark A.G."/>
            <person name="Waterman M.S."/>
            <person name="Eichler E.E."/>
            <person name="Adams M.D."/>
            <person name="Hunkapiller M.W."/>
            <person name="Myers E.W."/>
            <person name="Venter J.C."/>
        </authorList>
    </citation>
    <scope>NUCLEOTIDE SEQUENCE [LARGE SCALE GENOMIC DNA]</scope>
    <scope>VARIANT SER-179</scope>
</reference>
<reference key="6">
    <citation type="journal article" date="2004" name="Genome Res.">
        <title>The status, quality, and expansion of the NIH full-length cDNA project: the Mammalian Gene Collection (MGC).</title>
        <authorList>
            <consortium name="The MGC Project Team"/>
        </authorList>
    </citation>
    <scope>NUCLEOTIDE SEQUENCE [LARGE SCALE MRNA] (ISOFORMS 1 AND 3)</scope>
    <scope>VARIANT SER-179</scope>
    <source>
        <tissue>Lung</tissue>
        <tissue>Skin</tissue>
        <tissue>Testis</tissue>
    </source>
</reference>
<reference key="7">
    <citation type="journal article" date="2005" name="DNA Res.">
        <title>Signal sequence and keyword trap in silico for selection of full-length human cDNAs encoding secretion or membrane proteins from oligo-capped cDNA libraries.</title>
        <authorList>
            <person name="Otsuki T."/>
            <person name="Ota T."/>
            <person name="Nishikawa T."/>
            <person name="Hayashi K."/>
            <person name="Suzuki Y."/>
            <person name="Yamamoto J."/>
            <person name="Wakamatsu A."/>
            <person name="Kimura K."/>
            <person name="Sakamoto K."/>
            <person name="Hatano N."/>
            <person name="Kawai Y."/>
            <person name="Ishii S."/>
            <person name="Saito K."/>
            <person name="Kojima S."/>
            <person name="Sugiyama T."/>
            <person name="Ono T."/>
            <person name="Okano K."/>
            <person name="Yoshikawa Y."/>
            <person name="Aotsuka S."/>
            <person name="Sasaki N."/>
            <person name="Hattori A."/>
            <person name="Okumura K."/>
            <person name="Nagai K."/>
            <person name="Sugano S."/>
            <person name="Isogai T."/>
        </authorList>
    </citation>
    <scope>NUCLEOTIDE SEQUENCE [LARGE SCALE MRNA] OF 403-1204 (ISOFORM 1)</scope>
    <source>
        <tissue>Placenta</tissue>
    </source>
</reference>
<reference key="8">
    <citation type="submission" date="2002-09" db="EMBL/GenBank/DDBJ databases">
        <authorList>
            <person name="Wang L."/>
            <person name="Li K."/>
            <person name="Cheng J."/>
        </authorList>
    </citation>
    <scope>NUCLEOTIDE SEQUENCE [MRNA] OF 710-1204 (ISOFORM 1)</scope>
</reference>
<reference key="9">
    <citation type="journal article" date="2007" name="BMC Genomics">
        <title>The full-ORF clone resource of the German cDNA consortium.</title>
        <authorList>
            <person name="Bechtel S."/>
            <person name="Rosenfelder H."/>
            <person name="Duda A."/>
            <person name="Schmidt C.P."/>
            <person name="Ernst U."/>
            <person name="Wellenreuther R."/>
            <person name="Mehrle A."/>
            <person name="Schuster C."/>
            <person name="Bahr A."/>
            <person name="Bloecker H."/>
            <person name="Heubner D."/>
            <person name="Hoerlein A."/>
            <person name="Michel G."/>
            <person name="Wedler H."/>
            <person name="Koehrer K."/>
            <person name="Ottenwaelder B."/>
            <person name="Poustka A."/>
            <person name="Wiemann S."/>
            <person name="Schupp I."/>
        </authorList>
    </citation>
    <scope>NUCLEOTIDE SEQUENCE [LARGE SCALE MRNA] OF 728-1204 (ISOFORM 1)</scope>
    <source>
        <tissue>Melanoma</tissue>
    </source>
</reference>
<reference key="10">
    <citation type="journal article" date="2008" name="Proc. Natl. Acad. Sci. U.S.A.">
        <title>A quantitative atlas of mitotic phosphorylation.</title>
        <authorList>
            <person name="Dephoure N."/>
            <person name="Zhou C."/>
            <person name="Villen J."/>
            <person name="Beausoleil S.A."/>
            <person name="Bakalarski C.E."/>
            <person name="Elledge S.J."/>
            <person name="Gygi S.P."/>
        </authorList>
    </citation>
    <scope>PHOSPHORYLATION [LARGE SCALE ANALYSIS] AT SER-208 AND SER-1163</scope>
    <scope>IDENTIFICATION BY MASS SPECTROMETRY [LARGE SCALE ANALYSIS]</scope>
    <source>
        <tissue>Cervix carcinoma</tissue>
    </source>
</reference>
<reference key="11">
    <citation type="journal article" date="2011" name="BMC Syst. Biol.">
        <title>Initial characterization of the human central proteome.</title>
        <authorList>
            <person name="Burkard T.R."/>
            <person name="Planyavsky M."/>
            <person name="Kaupe I."/>
            <person name="Breitwieser F.P."/>
            <person name="Buerckstuemmer T."/>
            <person name="Bennett K.L."/>
            <person name="Superti-Furga G."/>
            <person name="Colinge J."/>
        </authorList>
    </citation>
    <scope>IDENTIFICATION BY MASS SPECTROMETRY [LARGE SCALE ANALYSIS]</scope>
</reference>
<reference key="12">
    <citation type="journal article" date="2013" name="J. Proteome Res.">
        <title>Toward a comprehensive characterization of a human cancer cell phosphoproteome.</title>
        <authorList>
            <person name="Zhou H."/>
            <person name="Di Palma S."/>
            <person name="Preisinger C."/>
            <person name="Peng M."/>
            <person name="Polat A.N."/>
            <person name="Heck A.J."/>
            <person name="Mohammed S."/>
        </authorList>
    </citation>
    <scope>PHOSPHORYLATION [LARGE SCALE ANALYSIS] AT SER-208</scope>
    <scope>IDENTIFICATION BY MASS SPECTROMETRY [LARGE SCALE ANALYSIS]</scope>
    <source>
        <tissue>Cervix carcinoma</tissue>
        <tissue>Erythroleukemia</tissue>
    </source>
</reference>
<reference key="13">
    <citation type="journal article" date="2006" name="Science">
        <title>The consensus coding sequences of human breast and colorectal cancers.</title>
        <authorList>
            <person name="Sjoeblom T."/>
            <person name="Jones S."/>
            <person name="Wood L.D."/>
            <person name="Parsons D.W."/>
            <person name="Lin J."/>
            <person name="Barber T.D."/>
            <person name="Mandelker D."/>
            <person name="Leary R.J."/>
            <person name="Ptak J."/>
            <person name="Silliman N."/>
            <person name="Szabo S."/>
            <person name="Buckhaults P."/>
            <person name="Farrell C."/>
            <person name="Meeh P."/>
            <person name="Markowitz S.D."/>
            <person name="Willis J."/>
            <person name="Dawson D."/>
            <person name="Willson J.K.V."/>
            <person name="Gazdar A.F."/>
            <person name="Hartigan J."/>
            <person name="Wu L."/>
            <person name="Liu C."/>
            <person name="Parmigiani G."/>
            <person name="Park B.H."/>
            <person name="Bachman K.E."/>
            <person name="Papadopoulos N."/>
            <person name="Vogelstein B."/>
            <person name="Kinzler K.W."/>
            <person name="Velculescu V.E."/>
        </authorList>
    </citation>
    <scope>VARIANT [LARGE SCALE ANALYSIS] SER-927</scope>
</reference>
<name>FND3B_HUMAN</name>
<feature type="chain" id="PRO_0000284891" description="Fibronectin type III domain-containing protein 3B">
    <location>
        <begin position="1"/>
        <end position="1204"/>
    </location>
</feature>
<feature type="transmembrane region" description="Helical" evidence="3">
    <location>
        <begin position="1182"/>
        <end position="1202"/>
    </location>
</feature>
<feature type="domain" description="Fibronectin type-III 1" evidence="4">
    <location>
        <begin position="278"/>
        <end position="377"/>
    </location>
</feature>
<feature type="domain" description="Fibronectin type-III 2" evidence="4">
    <location>
        <begin position="381"/>
        <end position="473"/>
    </location>
</feature>
<feature type="domain" description="Fibronectin type-III 3" evidence="4">
    <location>
        <begin position="477"/>
        <end position="570"/>
    </location>
</feature>
<feature type="domain" description="Fibronectin type-III 4" evidence="4">
    <location>
        <begin position="574"/>
        <end position="669"/>
    </location>
</feature>
<feature type="domain" description="Fibronectin type-III 5" evidence="4">
    <location>
        <begin position="673"/>
        <end position="765"/>
    </location>
</feature>
<feature type="domain" description="Fibronectin type-III 6" evidence="4">
    <location>
        <begin position="766"/>
        <end position="859"/>
    </location>
</feature>
<feature type="domain" description="Fibronectin type-III 7" evidence="4">
    <location>
        <begin position="871"/>
        <end position="957"/>
    </location>
</feature>
<feature type="domain" description="Fibronectin type-III 8" evidence="4">
    <location>
        <begin position="958"/>
        <end position="1052"/>
    </location>
</feature>
<feature type="domain" description="Fibronectin type-III 9" evidence="4">
    <location>
        <begin position="1056"/>
        <end position="1153"/>
    </location>
</feature>
<feature type="region of interest" description="Disordered" evidence="5">
    <location>
        <begin position="185"/>
        <end position="215"/>
    </location>
</feature>
<feature type="region of interest" description="Disordered" evidence="5">
    <location>
        <begin position="228"/>
        <end position="262"/>
    </location>
</feature>
<feature type="compositionally biased region" description="Polar residues" evidence="5">
    <location>
        <begin position="205"/>
        <end position="215"/>
    </location>
</feature>
<feature type="compositionally biased region" description="Gly residues" evidence="5">
    <location>
        <begin position="228"/>
        <end position="242"/>
    </location>
</feature>
<feature type="modified residue" description="Phosphoserine" evidence="15 16">
    <location>
        <position position="208"/>
    </location>
</feature>
<feature type="modified residue" description="Phosphoserine" evidence="2">
    <location>
        <position position="393"/>
    </location>
</feature>
<feature type="modified residue" description="Phosphoserine" evidence="15">
    <location>
        <position position="1163"/>
    </location>
</feature>
<feature type="splice variant" id="VSP_024739" description="In isoform 3." evidence="13">
    <original>GPAEVPMMS</original>
    <variation>DEVVKRACD</variation>
    <location>
        <begin position="63"/>
        <end position="71"/>
    </location>
</feature>
<feature type="splice variant" id="VSP_024740" description="In isoform 3." evidence="13">
    <location>
        <begin position="72"/>
        <end position="1204"/>
    </location>
</feature>
<feature type="splice variant" id="VSP_024741" description="In isoform 2." evidence="12">
    <original>ANQWEVAYSGSA</original>
    <variation>GEVFGNCFIQIQ</variation>
    <location>
        <begin position="618"/>
        <end position="629"/>
    </location>
</feature>
<feature type="splice variant" id="VSP_024742" description="In isoform 2." evidence="12">
    <location>
        <begin position="630"/>
        <end position="1204"/>
    </location>
</feature>
<feature type="sequence variant" id="VAR_031856" description="In dbSNP:rs7652177." evidence="6 7 8 9 11">
    <original>T</original>
    <variation>S</variation>
    <location>
        <position position="179"/>
    </location>
</feature>
<feature type="sequence variant" id="VAR_035921" description="In a breast cancer sample; somatic mutation." evidence="10">
    <original>P</original>
    <variation>S</variation>
    <location>
        <position position="927"/>
    </location>
</feature>
<feature type="sequence variant" id="VAR_047814" description="In dbSNP:rs2276806.">
    <original>M</original>
    <variation>V</variation>
    <location>
        <position position="1080"/>
    </location>
</feature>
<feature type="sequence conflict" description="In Ref. 2; AAQ88733." evidence="14" ref="2">
    <original>Q</original>
    <variation>H</variation>
    <location>
        <position position="37"/>
    </location>
</feature>
<feature type="sequence conflict" description="In Ref. 1; BAC53727." evidence="14" ref="1">
    <original>S</original>
    <variation>R</variation>
    <location>
        <position position="208"/>
    </location>
</feature>
<feature type="sequence conflict" description="In Ref. 1; BAC53727." evidence="14" ref="1">
    <original>S</original>
    <variation>A</variation>
    <location>
        <position position="212"/>
    </location>
</feature>
<feature type="sequence conflict" description="In Ref. 3; BAG37083." evidence="14" ref="3">
    <original>N</original>
    <variation>D</variation>
    <location>
        <position position="360"/>
    </location>
</feature>
<feature type="sequence conflict" description="In Ref. 3; BAG37083." evidence="14" ref="3">
    <original>S</original>
    <variation>G</variation>
    <location>
        <position position="393"/>
    </location>
</feature>
<feature type="sequence conflict" description="In Ref. 3; BAG37083." evidence="14" ref="3">
    <original>T</original>
    <variation>A</variation>
    <location>
        <position position="448"/>
    </location>
</feature>
<feature type="sequence conflict" description="In Ref. 2; AAQ88513." evidence="14" ref="2">
    <original>P</original>
    <variation>L</variation>
    <location>
        <position position="481"/>
    </location>
</feature>
<feature type="sequence conflict" description="In Ref. 1; BAC53727." evidence="14" ref="1">
    <original>K</original>
    <variation>T</variation>
    <location>
        <position position="545"/>
    </location>
</feature>
<feature type="sequence conflict" description="In Ref. 4; BAD97319." evidence="14" ref="4">
    <original>P</original>
    <variation>S</variation>
    <location>
        <position position="676"/>
    </location>
</feature>
<feature type="sequence conflict" description="In Ref. 6; AAH39297." evidence="14" ref="6">
    <original>C</original>
    <variation>W</variation>
    <location>
        <position position="854"/>
    </location>
</feature>
<feature type="sequence conflict" description="In Ref. 3; BAC11480." evidence="14" ref="3">
    <original>N</original>
    <variation>D</variation>
    <location>
        <position position="895"/>
    </location>
</feature>
<feature type="sequence conflict" description="In Ref. 2; AAQ88513." evidence="14" ref="2">
    <original>G</original>
    <variation>V</variation>
    <location>
        <position position="1067"/>
    </location>
</feature>
<feature type="sequence conflict" description="In Ref. 3; BAG37083." evidence="14" ref="3">
    <original>D</original>
    <variation>G</variation>
    <location>
        <position position="1083"/>
    </location>
</feature>
<proteinExistence type="evidence at protein level"/>